<gene>
    <name evidence="1" type="primary">mutH</name>
    <name type="ordered locus">YPDSF_1706</name>
</gene>
<sequence>MSVYSLPPAPPSDEHQLFQRAQALSGFTLGELATRAQWVIPADLKRVKGWVGMLLEFYLGASAGSKPEQDFADIGIELKTIPISAQGKPLETTFVCVAPLTGNSGVTWESSHVRHKLARVLWVPVEGERHIPLAERRVGAPLLWSPNVEEEELLRRDWEELMDLIVLGKVESITARHGQVLQLRPKAANSRALTEAIGEFGQPIMTLPRGFYLKKTLTAPMLARHFLL</sequence>
<name>MUTH_YERPP</name>
<accession>A4TLC9</accession>
<comment type="function">
    <text evidence="1">Sequence-specific endonuclease that cleaves unmethylated GATC sequences. It is involved in DNA mismatch repair.</text>
</comment>
<comment type="subcellular location">
    <subcellularLocation>
        <location evidence="1">Cytoplasm</location>
    </subcellularLocation>
</comment>
<comment type="similarity">
    <text evidence="1">Belongs to the MutH family.</text>
</comment>
<organism>
    <name type="scientific">Yersinia pestis (strain Pestoides F)</name>
    <dbReference type="NCBI Taxonomy" id="386656"/>
    <lineage>
        <taxon>Bacteria</taxon>
        <taxon>Pseudomonadati</taxon>
        <taxon>Pseudomonadota</taxon>
        <taxon>Gammaproteobacteria</taxon>
        <taxon>Enterobacterales</taxon>
        <taxon>Yersiniaceae</taxon>
        <taxon>Yersinia</taxon>
    </lineage>
</organism>
<dbReference type="EMBL" id="CP000668">
    <property type="protein sequence ID" value="ABP40091.1"/>
    <property type="molecule type" value="Genomic_DNA"/>
</dbReference>
<dbReference type="RefSeq" id="WP_002209838.1">
    <property type="nucleotide sequence ID" value="NZ_CP009715.1"/>
</dbReference>
<dbReference type="SMR" id="A4TLC9"/>
<dbReference type="GeneID" id="57973847"/>
<dbReference type="KEGG" id="ypp:YPDSF_1706"/>
<dbReference type="PATRIC" id="fig|386656.14.peg.2055"/>
<dbReference type="GO" id="GO:0005737">
    <property type="term" value="C:cytoplasm"/>
    <property type="evidence" value="ECO:0007669"/>
    <property type="project" value="UniProtKB-SubCell"/>
</dbReference>
<dbReference type="GO" id="GO:0003677">
    <property type="term" value="F:DNA binding"/>
    <property type="evidence" value="ECO:0007669"/>
    <property type="project" value="InterPro"/>
</dbReference>
<dbReference type="GO" id="GO:0004519">
    <property type="term" value="F:endonuclease activity"/>
    <property type="evidence" value="ECO:0007669"/>
    <property type="project" value="UniProtKB-UniRule"/>
</dbReference>
<dbReference type="GO" id="GO:0006304">
    <property type="term" value="P:DNA modification"/>
    <property type="evidence" value="ECO:0007669"/>
    <property type="project" value="InterPro"/>
</dbReference>
<dbReference type="GO" id="GO:0006298">
    <property type="term" value="P:mismatch repair"/>
    <property type="evidence" value="ECO:0007669"/>
    <property type="project" value="UniProtKB-UniRule"/>
</dbReference>
<dbReference type="CDD" id="cd00583">
    <property type="entry name" value="MutH-like"/>
    <property type="match status" value="1"/>
</dbReference>
<dbReference type="FunFam" id="3.40.600.10:FF:000001">
    <property type="entry name" value="DNA mismatch repair protein MutH"/>
    <property type="match status" value="1"/>
</dbReference>
<dbReference type="Gene3D" id="3.40.600.10">
    <property type="entry name" value="DNA mismatch repair MutH/Restriction endonuclease, type II"/>
    <property type="match status" value="1"/>
</dbReference>
<dbReference type="HAMAP" id="MF_00759">
    <property type="entry name" value="MutH"/>
    <property type="match status" value="1"/>
</dbReference>
<dbReference type="InterPro" id="IPR004230">
    <property type="entry name" value="DNA_mismatch_repair_MutH"/>
</dbReference>
<dbReference type="InterPro" id="IPR011337">
    <property type="entry name" value="DNA_rep_MutH/RE_typeII_Sau3AI"/>
</dbReference>
<dbReference type="InterPro" id="IPR037057">
    <property type="entry name" value="DNA_rep_MutH/T2_RE_sf"/>
</dbReference>
<dbReference type="InterPro" id="IPR011335">
    <property type="entry name" value="Restrct_endonuc-II-like"/>
</dbReference>
<dbReference type="NCBIfam" id="TIGR02248">
    <property type="entry name" value="mutH_TIGR"/>
    <property type="match status" value="1"/>
</dbReference>
<dbReference type="NCBIfam" id="NF003458">
    <property type="entry name" value="PRK05070.1"/>
    <property type="match status" value="1"/>
</dbReference>
<dbReference type="Pfam" id="PF02976">
    <property type="entry name" value="MutH"/>
    <property type="match status" value="1"/>
</dbReference>
<dbReference type="SMART" id="SM00927">
    <property type="entry name" value="MutH"/>
    <property type="match status" value="1"/>
</dbReference>
<dbReference type="SUPFAM" id="SSF52980">
    <property type="entry name" value="Restriction endonuclease-like"/>
    <property type="match status" value="1"/>
</dbReference>
<evidence type="ECO:0000255" key="1">
    <source>
        <dbReference type="HAMAP-Rule" id="MF_00759"/>
    </source>
</evidence>
<feature type="chain" id="PRO_1000046721" description="DNA mismatch repair protein MutH">
    <location>
        <begin position="1"/>
        <end position="228"/>
    </location>
</feature>
<protein>
    <recommendedName>
        <fullName evidence="1">DNA mismatch repair protein MutH</fullName>
    </recommendedName>
    <alternativeName>
        <fullName evidence="1">Methyl-directed mismatch repair protein</fullName>
    </alternativeName>
</protein>
<reference key="1">
    <citation type="submission" date="2007-02" db="EMBL/GenBank/DDBJ databases">
        <title>Complete sequence of chromosome of Yersinia pestis Pestoides F.</title>
        <authorList>
            <consortium name="US DOE Joint Genome Institute"/>
            <person name="Copeland A."/>
            <person name="Lucas S."/>
            <person name="Lapidus A."/>
            <person name="Barry K."/>
            <person name="Detter J.C."/>
            <person name="Glavina del Rio T."/>
            <person name="Hammon N."/>
            <person name="Israni S."/>
            <person name="Dalin E."/>
            <person name="Tice H."/>
            <person name="Pitluck S."/>
            <person name="Di Bartolo G."/>
            <person name="Chain P."/>
            <person name="Malfatti S."/>
            <person name="Shin M."/>
            <person name="Vergez L."/>
            <person name="Schmutz J."/>
            <person name="Larimer F."/>
            <person name="Land M."/>
            <person name="Hauser L."/>
            <person name="Worsham P."/>
            <person name="Chu M."/>
            <person name="Bearden S."/>
            <person name="Garcia E."/>
            <person name="Richardson P."/>
        </authorList>
    </citation>
    <scope>NUCLEOTIDE SEQUENCE [LARGE SCALE GENOMIC DNA]</scope>
    <source>
        <strain>Pestoides F</strain>
    </source>
</reference>
<keyword id="KW-0963">Cytoplasm</keyword>
<keyword id="KW-0227">DNA damage</keyword>
<keyword id="KW-0234">DNA repair</keyword>
<keyword id="KW-0255">Endonuclease</keyword>
<keyword id="KW-0378">Hydrolase</keyword>
<keyword id="KW-0540">Nuclease</keyword>
<proteinExistence type="inferred from homology"/>